<proteinExistence type="evidence at protein level"/>
<reference key="1">
    <citation type="journal article" date="2004" name="Proc. Natl. Acad. Sci. U.S.A.">
        <title>The diploid genome sequence of Candida albicans.</title>
        <authorList>
            <person name="Jones T."/>
            <person name="Federspiel N.A."/>
            <person name="Chibana H."/>
            <person name="Dungan J."/>
            <person name="Kalman S."/>
            <person name="Magee B.B."/>
            <person name="Newport G."/>
            <person name="Thorstenson Y.R."/>
            <person name="Agabian N."/>
            <person name="Magee P.T."/>
            <person name="Davis R.W."/>
            <person name="Scherer S."/>
        </authorList>
    </citation>
    <scope>NUCLEOTIDE SEQUENCE [LARGE SCALE GENOMIC DNA]</scope>
    <source>
        <strain>SC5314 / ATCC MYA-2876</strain>
    </source>
</reference>
<reference key="2">
    <citation type="journal article" date="2007" name="Genome Biol.">
        <title>Assembly of the Candida albicans genome into sixteen supercontigs aligned on the eight chromosomes.</title>
        <authorList>
            <person name="van het Hoog M."/>
            <person name="Rast T.J."/>
            <person name="Martchenko M."/>
            <person name="Grindle S."/>
            <person name="Dignard D."/>
            <person name="Hogues H."/>
            <person name="Cuomo C."/>
            <person name="Berriman M."/>
            <person name="Scherer S."/>
            <person name="Magee B.B."/>
            <person name="Whiteway M."/>
            <person name="Chibana H."/>
            <person name="Nantel A."/>
            <person name="Magee P.T."/>
        </authorList>
    </citation>
    <scope>GENOME REANNOTATION</scope>
    <source>
        <strain>SC5314 / ATCC MYA-2876</strain>
    </source>
</reference>
<reference key="3">
    <citation type="journal article" date="2013" name="Genome Biol.">
        <title>Assembly of a phased diploid Candida albicans genome facilitates allele-specific measurements and provides a simple model for repeat and indel structure.</title>
        <authorList>
            <person name="Muzzey D."/>
            <person name="Schwartz K."/>
            <person name="Weissman J.S."/>
            <person name="Sherlock G."/>
        </authorList>
    </citation>
    <scope>NUCLEOTIDE SEQUENCE [LARGE SCALE GENOMIC DNA]</scope>
    <scope>GENOME REANNOTATION</scope>
    <source>
        <strain>SC5314 / ATCC MYA-2876</strain>
    </source>
</reference>
<reference key="4">
    <citation type="journal article" date="2005" name="Infect. Immun.">
        <title>Virulence of the fungal pathogen Candida albicans requires the five isoforms of protein mannosyltransferases.</title>
        <authorList>
            <person name="Rouabhia M."/>
            <person name="Schaller M."/>
            <person name="Corbucci C."/>
            <person name="Vecchiarelli A."/>
            <person name="Prill S.K."/>
            <person name="Giasson L."/>
            <person name="Ernst J.F."/>
        </authorList>
    </citation>
    <scope>DISRUPTION PHENOTYPE</scope>
    <scope>FUNCTION</scope>
</reference>
<reference key="5">
    <citation type="journal article" date="2005" name="Mol. Microbiol.">
        <title>PMT family of Candida albicans: five protein mannosyltransferase isoforms affect growth, morphogenesis and antifungal resistance.</title>
        <authorList>
            <person name="Prill S.K."/>
            <person name="Klinkert B."/>
            <person name="Timpel C."/>
            <person name="Gale C.A."/>
            <person name="Schroppel K."/>
            <person name="Ernst J.F."/>
        </authorList>
    </citation>
    <scope>IDENTIFICATION</scope>
    <scope>DISRUPTION PHENOTYPE</scope>
    <scope>INDUCTION</scope>
</reference>
<reference key="6">
    <citation type="journal article" date="2006" name="Fungal Genet. Biol.">
        <title>Genomic response programs of Candida albicans following protoplasting and regeneration.</title>
        <authorList>
            <person name="Castillo L."/>
            <person name="Martinez A.I."/>
            <person name="Garcera A."/>
            <person name="Garcia-Martinez J."/>
            <person name="Ruiz-Herrera J."/>
            <person name="Valentin E."/>
            <person name="Sentandreu R."/>
        </authorList>
    </citation>
    <scope>INDUCTION</scope>
</reference>
<reference key="7">
    <citation type="journal article" date="2006" name="Proteomics">
        <title>Proteomic analysis of detergent-resistant membranes from Candida albicans.</title>
        <authorList>
            <person name="Insenser M."/>
            <person name="Nombela C."/>
            <person name="Molero G."/>
            <person name="Gil C."/>
        </authorList>
    </citation>
    <scope>IDENTIFICATION BY MASS SPECTROMETRY</scope>
    <scope>SUBCELLULAR LOCATION</scope>
</reference>
<reference key="8">
    <citation type="journal article" date="2011" name="Mol. Microbiol.">
        <title>Damage to the glycoshield activates PMT-directed O-mannosylation via the Msb2-Cek1 pathway in Candida albicans.</title>
        <authorList>
            <person name="Cantero P.D."/>
            <person name="Ernst J.F."/>
        </authorList>
    </citation>
    <scope>INDUCTION</scope>
</reference>
<reference key="9">
    <citation type="journal article" date="2012" name="PLoS ONE">
        <title>Proteomic analysis of Rta2p-dependent raft-association of detergent-resistant membranes in Candida albicans.</title>
        <authorList>
            <person name="Wang L."/>
            <person name="Jia Y."/>
            <person name="Tang R.J."/>
            <person name="Xu Z."/>
            <person name="Cao Y.B."/>
            <person name="Jia X.M."/>
            <person name="Jiang Y.Y."/>
        </authorList>
    </citation>
    <scope>IDENTIFICATION BY MASS SPECTROMETRY</scope>
    <scope>SUBCELLULAR LOCATION</scope>
</reference>
<comment type="function">
    <text evidence="8">Protein mannosyltransferase (PMT) involved in hyphal growth and drug sensitivity. Transfers mannose from Dol-P-mannose to Ser or Thr residues on proteins. PMT1, PMT2 and PMT4 account for most of the protein-O-glycosylation activity, while PMT5 and PMT6 may specifically modulate a much narrower spectrum of target proteins. Essential protein that plays an important role in virulence.</text>
</comment>
<comment type="catalytic activity">
    <reaction evidence="2 13">
        <text>a di-trans,poly-cis-dolichyl beta-D-mannosyl phosphate + L-seryl-[protein] = 3-O-(alpha-D-mannosyl)-L-seryl-[protein] + a di-trans,poly-cis-dolichyl phosphate + H(+)</text>
        <dbReference type="Rhea" id="RHEA:17377"/>
        <dbReference type="Rhea" id="RHEA-COMP:9863"/>
        <dbReference type="Rhea" id="RHEA-COMP:13546"/>
        <dbReference type="Rhea" id="RHEA-COMP:19498"/>
        <dbReference type="Rhea" id="RHEA-COMP:19501"/>
        <dbReference type="ChEBI" id="CHEBI:15378"/>
        <dbReference type="ChEBI" id="CHEBI:29999"/>
        <dbReference type="ChEBI" id="CHEBI:57683"/>
        <dbReference type="ChEBI" id="CHEBI:58211"/>
        <dbReference type="ChEBI" id="CHEBI:137321"/>
        <dbReference type="EC" id="2.4.1.109"/>
    </reaction>
</comment>
<comment type="catalytic activity">
    <reaction evidence="2 13">
        <text>a di-trans,poly-cis-dolichyl beta-D-mannosyl phosphate + L-threonyl-[protein] = 3-O-(alpha-D-mannosyl)-L-threonyl-[protein] + a di-trans,poly-cis-dolichyl phosphate + H(+)</text>
        <dbReference type="Rhea" id="RHEA:53396"/>
        <dbReference type="Rhea" id="RHEA-COMP:11060"/>
        <dbReference type="Rhea" id="RHEA-COMP:13547"/>
        <dbReference type="Rhea" id="RHEA-COMP:19498"/>
        <dbReference type="Rhea" id="RHEA-COMP:19501"/>
        <dbReference type="ChEBI" id="CHEBI:15378"/>
        <dbReference type="ChEBI" id="CHEBI:30013"/>
        <dbReference type="ChEBI" id="CHEBI:57683"/>
        <dbReference type="ChEBI" id="CHEBI:58211"/>
        <dbReference type="ChEBI" id="CHEBI:137323"/>
        <dbReference type="EC" id="2.4.1.109"/>
    </reaction>
</comment>
<comment type="pathway">
    <text evidence="14">Protein modification; protein glycosylation.</text>
</comment>
<comment type="subunit">
    <text evidence="1">PMT1 and PMT2 form a functional heterodimer.</text>
</comment>
<comment type="subcellular location">
    <subcellularLocation>
        <location evidence="1">Endoplasmic reticulum membrane</location>
        <topology evidence="3">Multi-pass membrane protein</topology>
    </subcellularLocation>
    <text evidence="10 12">Associates with lipid rafts in a RTA2-dependent manner.</text>
</comment>
<comment type="induction">
    <text evidence="7 9 11">Transcribed in the yeast form, but expression is increased two to threefold during hyphal induction. Also induced during cell wall regeneration. Up-regulated more than twofold when PMT1 expression is impaired. MSB2 functions not only to secure basal levels of the PMT2 transcripts but is needed also for up-regulation of both transcripts upon PMT1 inhibition.</text>
</comment>
<comment type="disruption phenotype">
    <text evidence="7 8">Disruption of both alleles leads to letality. Disruption of only one allele impairs filamentation and leads to an altered cell wall composition with reduced amounts of beta-1,6-glucan and shows reduced virulence in a mouse model of hematogenously disseminated candidiasis (HDC) and using reconstituted human epithelium (RHE).</text>
</comment>
<comment type="similarity">
    <text evidence="14">Belongs to the glycosyltransferase 39 family.</text>
</comment>
<accession>Q5ADM9</accession>
<accession>A0A1D8PKL8</accession>
<sequence>MSTSVEPNETEALLRKQNDLSTTASIEEKYPHQQGEAAEDDDDTLKRTQYDEAKETAESLKQVESILAPIVFTALSFFVRFYRISVNDHVVWDEAHFGKFGSYYLRHEFYHDVHPPLGKMLVGLSGYLAGYNGSWDFPSGEKYPDYIDYTKMRLFNATFSALCVPLAYFTGKEVGFSMFTTWLFTLMVALESSYVTLGKFILLDSMLLFFTVATVFCFSRFNNFNNKSQEFSRKWWKWILLTGVSIGCTCSVKMVGLFVTTLVGIYTVVDLWNKLSDKSISWTKYIQHWFARIVALILVPIFIFMLSFKVHFDLLYKSGTGDANMSSLFQANLAGSDVGGGPREVSMFHSVITLKNQGLSGGLLHSHVQTFPEGSKQQQVTTYGHKDSNNNWIFQRARGQPYYDTSGNTTDIEYIFDGMHVRLMHPQTGRNLHTHDIPAPVSKSEYEVACYGNLTIGDPKDNWTVEIMEQASDEDKMRLHPLTSSFRLKNEVMNCYLGVTGTTLPQWGFRQGEVVCYKNPFKKDKRTWWNIENNRNAVLPPAPEDFKLPKTKFIRDFIQLNLAMMATNNALVPDTEKQDDLASSFWQWPTLNVGIRMCGWGPENPKYYMIGSPATTWTSTVGVILFAFIVLYYLIRWQRQYVDFPSTNPHKLKLFLMGGIYPMFGWGLHFLPFAIMGRVTYVHHYVPALYFAMLVFCYEVESFSSRLNKPNASPVSKLLYLAIYIGLLSLVAGTFWYFRYLSWGMEGPKEDWKHLKLLESWRVSDDQYT</sequence>
<gene>
    <name evidence="13" type="primary">PMT2</name>
    <name type="ordered locus">CAALFM_C306890WA</name>
    <name type="ORF">CaO19.14104</name>
    <name type="ORF">CaO19.6812</name>
</gene>
<dbReference type="EC" id="2.4.1.109" evidence="2 13"/>
<dbReference type="EMBL" id="CP017625">
    <property type="protein sequence ID" value="AOW28694.1"/>
    <property type="molecule type" value="Genomic_DNA"/>
</dbReference>
<dbReference type="RefSeq" id="XP_719907.1">
    <property type="nucleotide sequence ID" value="XM_714814.1"/>
</dbReference>
<dbReference type="SMR" id="Q5ADM9"/>
<dbReference type="FunCoup" id="Q5ADM9">
    <property type="interactions" value="972"/>
</dbReference>
<dbReference type="STRING" id="237561.Q5ADM9"/>
<dbReference type="GlyCosmos" id="Q5ADM9">
    <property type="glycosylation" value="7 sites, No reported glycans"/>
</dbReference>
<dbReference type="EnsemblFungi" id="C3_06890W_A-T">
    <property type="protein sequence ID" value="C3_06890W_A-T-p1"/>
    <property type="gene ID" value="C3_06890W_A"/>
</dbReference>
<dbReference type="GeneID" id="3638538"/>
<dbReference type="KEGG" id="cal:CAALFM_C306890WA"/>
<dbReference type="CGD" id="CAL0000187219">
    <property type="gene designation" value="PMT2"/>
</dbReference>
<dbReference type="VEuPathDB" id="FungiDB:C3_06890W_A"/>
<dbReference type="eggNOG" id="KOG3359">
    <property type="taxonomic scope" value="Eukaryota"/>
</dbReference>
<dbReference type="HOGENOM" id="CLU_008438_5_0_1"/>
<dbReference type="InParanoid" id="Q5ADM9"/>
<dbReference type="OMA" id="MCGWDDN"/>
<dbReference type="OrthoDB" id="292747at2759"/>
<dbReference type="BRENDA" id="2.4.1.109">
    <property type="organism ID" value="1096"/>
</dbReference>
<dbReference type="UniPathway" id="UPA00378"/>
<dbReference type="PHI-base" id="PHI:454"/>
<dbReference type="PRO" id="PR:Q5ADM9"/>
<dbReference type="Proteomes" id="UP000000559">
    <property type="component" value="Chromosome 3"/>
</dbReference>
<dbReference type="GO" id="GO:0005783">
    <property type="term" value="C:endoplasmic reticulum"/>
    <property type="evidence" value="ECO:0000318"/>
    <property type="project" value="GO_Central"/>
</dbReference>
<dbReference type="GO" id="GO:0005789">
    <property type="term" value="C:endoplasmic reticulum membrane"/>
    <property type="evidence" value="ECO:0007669"/>
    <property type="project" value="UniProtKB-SubCell"/>
</dbReference>
<dbReference type="GO" id="GO:0016020">
    <property type="term" value="C:membrane"/>
    <property type="evidence" value="ECO:0000314"/>
    <property type="project" value="CGD"/>
</dbReference>
<dbReference type="GO" id="GO:0005886">
    <property type="term" value="C:plasma membrane"/>
    <property type="evidence" value="ECO:0000314"/>
    <property type="project" value="CGD"/>
</dbReference>
<dbReference type="GO" id="GO:0004169">
    <property type="term" value="F:dolichyl-phosphate-mannose-protein mannosyltransferase activity"/>
    <property type="evidence" value="ECO:0000318"/>
    <property type="project" value="GO_Central"/>
</dbReference>
<dbReference type="GO" id="GO:0036178">
    <property type="term" value="P:filamentous growth of a population of unicellular organisms in response to neutral pH"/>
    <property type="evidence" value="ECO:0000315"/>
    <property type="project" value="CGD"/>
</dbReference>
<dbReference type="GO" id="GO:0035269">
    <property type="term" value="P:protein O-linked mannosylation"/>
    <property type="evidence" value="ECO:0000318"/>
    <property type="project" value="GO_Central"/>
</dbReference>
<dbReference type="GO" id="GO:0044011">
    <property type="term" value="P:single-species biofilm formation on inanimate substrate"/>
    <property type="evidence" value="ECO:0000315"/>
    <property type="project" value="CGD"/>
</dbReference>
<dbReference type="CDD" id="cd23284">
    <property type="entry name" value="beta-trefoil_MIR_PMT2-like"/>
    <property type="match status" value="1"/>
</dbReference>
<dbReference type="FunFam" id="2.80.10.50:FF:000012">
    <property type="entry name" value="Protein O-mannosyl-transferase 1"/>
    <property type="match status" value="1"/>
</dbReference>
<dbReference type="Gene3D" id="2.80.10.50">
    <property type="match status" value="1"/>
</dbReference>
<dbReference type="InterPro" id="IPR027005">
    <property type="entry name" value="GlyclTrfase_39-like"/>
</dbReference>
<dbReference type="InterPro" id="IPR003342">
    <property type="entry name" value="Glyco_trans_39/83"/>
</dbReference>
<dbReference type="InterPro" id="IPR036300">
    <property type="entry name" value="MIR_dom_sf"/>
</dbReference>
<dbReference type="InterPro" id="IPR016093">
    <property type="entry name" value="MIR_motif"/>
</dbReference>
<dbReference type="InterPro" id="IPR032421">
    <property type="entry name" value="PMT_4TMC"/>
</dbReference>
<dbReference type="PANTHER" id="PTHR10050">
    <property type="entry name" value="DOLICHYL-PHOSPHATE-MANNOSE--PROTEIN MANNOSYLTRANSFERASE"/>
    <property type="match status" value="1"/>
</dbReference>
<dbReference type="PANTHER" id="PTHR10050:SF46">
    <property type="entry name" value="PROTEIN O-MANNOSYL-TRANSFERASE 2"/>
    <property type="match status" value="1"/>
</dbReference>
<dbReference type="Pfam" id="PF02815">
    <property type="entry name" value="MIR"/>
    <property type="match status" value="1"/>
</dbReference>
<dbReference type="Pfam" id="PF02366">
    <property type="entry name" value="PMT"/>
    <property type="match status" value="1"/>
</dbReference>
<dbReference type="Pfam" id="PF16192">
    <property type="entry name" value="PMT_4TMC"/>
    <property type="match status" value="1"/>
</dbReference>
<dbReference type="SMART" id="SM00472">
    <property type="entry name" value="MIR"/>
    <property type="match status" value="3"/>
</dbReference>
<dbReference type="SUPFAM" id="SSF82109">
    <property type="entry name" value="MIR domain"/>
    <property type="match status" value="1"/>
</dbReference>
<dbReference type="PROSITE" id="PS50919">
    <property type="entry name" value="MIR"/>
    <property type="match status" value="3"/>
</dbReference>
<name>PMT2_CANAL</name>
<organism>
    <name type="scientific">Candida albicans (strain SC5314 / ATCC MYA-2876)</name>
    <name type="common">Yeast</name>
    <dbReference type="NCBI Taxonomy" id="237561"/>
    <lineage>
        <taxon>Eukaryota</taxon>
        <taxon>Fungi</taxon>
        <taxon>Dikarya</taxon>
        <taxon>Ascomycota</taxon>
        <taxon>Saccharomycotina</taxon>
        <taxon>Pichiomycetes</taxon>
        <taxon>Debaryomycetaceae</taxon>
        <taxon>Candida/Lodderomyces clade</taxon>
        <taxon>Candida</taxon>
    </lineage>
</organism>
<feature type="chain" id="PRO_0000430577" description="Dolichyl-phosphate-mannose--protein mannosyltransferase 2">
    <location>
        <begin position="1"/>
        <end position="769"/>
    </location>
</feature>
<feature type="transmembrane region" description="Helical; Name=1" evidence="3">
    <location>
        <begin position="59"/>
        <end position="79"/>
    </location>
</feature>
<feature type="transmembrane region" description="Helical; Name=2" evidence="3">
    <location>
        <begin position="152"/>
        <end position="169"/>
    </location>
</feature>
<feature type="transmembrane region" description="Helical; Name=3" evidence="3">
    <location>
        <begin position="176"/>
        <end position="194"/>
    </location>
</feature>
<feature type="transmembrane region" description="Helical; Name=4" evidence="3">
    <location>
        <begin position="200"/>
        <end position="218"/>
    </location>
</feature>
<feature type="transmembrane region" description="Helical; Name=5" evidence="3">
    <location>
        <begin position="252"/>
        <end position="272"/>
    </location>
</feature>
<feature type="transmembrane region" description="Helical; Name=6" evidence="3">
    <location>
        <begin position="288"/>
        <end position="308"/>
    </location>
</feature>
<feature type="transmembrane region" description="Helical; Name=7" evidence="3">
    <location>
        <begin position="615"/>
        <end position="635"/>
    </location>
</feature>
<feature type="transmembrane region" description="Helical; Name=8" evidence="3">
    <location>
        <begin position="655"/>
        <end position="675"/>
    </location>
</feature>
<feature type="transmembrane region" description="Helical; Name=9" evidence="3">
    <location>
        <begin position="679"/>
        <end position="699"/>
    </location>
</feature>
<feature type="transmembrane region" description="Helical; Name=10" evidence="3">
    <location>
        <begin position="718"/>
        <end position="738"/>
    </location>
</feature>
<feature type="domain" description="MIR 1" evidence="4">
    <location>
        <begin position="342"/>
        <end position="397"/>
    </location>
</feature>
<feature type="domain" description="MIR 2" evidence="4">
    <location>
        <begin position="412"/>
        <end position="468"/>
    </location>
</feature>
<feature type="domain" description="MIR 3" evidence="4">
    <location>
        <begin position="474"/>
        <end position="534"/>
    </location>
</feature>
<feature type="region of interest" description="Disordered" evidence="6">
    <location>
        <begin position="1"/>
        <end position="44"/>
    </location>
</feature>
<feature type="glycosylation site" description="N-linked (GlcNAc...) asparagine" evidence="5">
    <location>
        <position position="8"/>
    </location>
</feature>
<feature type="glycosylation site" description="N-linked (GlcNAc...) asparagine" evidence="5">
    <location>
        <position position="132"/>
    </location>
</feature>
<feature type="glycosylation site" description="N-linked (GlcNAc...) asparagine" evidence="5">
    <location>
        <position position="226"/>
    </location>
</feature>
<feature type="glycosylation site" description="N-linked (GlcNAc...) asparagine" evidence="5">
    <location>
        <position position="324"/>
    </location>
</feature>
<feature type="glycosylation site" description="N-linked (GlcNAc...) asparagine" evidence="5">
    <location>
        <position position="408"/>
    </location>
</feature>
<feature type="glycosylation site" description="N-linked (GlcNAc...) asparagine" evidence="5">
    <location>
        <position position="453"/>
    </location>
</feature>
<feature type="glycosylation site" description="N-linked (GlcNAc...) asparagine" evidence="5">
    <location>
        <position position="462"/>
    </location>
</feature>
<keyword id="KW-0256">Endoplasmic reticulum</keyword>
<keyword id="KW-0325">Glycoprotein</keyword>
<keyword id="KW-0328">Glycosyltransferase</keyword>
<keyword id="KW-0472">Membrane</keyword>
<keyword id="KW-1185">Reference proteome</keyword>
<keyword id="KW-0677">Repeat</keyword>
<keyword id="KW-0808">Transferase</keyword>
<keyword id="KW-0812">Transmembrane</keyword>
<keyword id="KW-1133">Transmembrane helix</keyword>
<keyword id="KW-0843">Virulence</keyword>
<evidence type="ECO:0000250" key="1">
    <source>
        <dbReference type="UniProtKB" id="P31382"/>
    </source>
</evidence>
<evidence type="ECO:0000250" key="2">
    <source>
        <dbReference type="UniProtKB" id="P33775"/>
    </source>
</evidence>
<evidence type="ECO:0000255" key="3"/>
<evidence type="ECO:0000255" key="4">
    <source>
        <dbReference type="PROSITE-ProRule" id="PRU00131"/>
    </source>
</evidence>
<evidence type="ECO:0000255" key="5">
    <source>
        <dbReference type="PROSITE-ProRule" id="PRU00498"/>
    </source>
</evidence>
<evidence type="ECO:0000256" key="6">
    <source>
        <dbReference type="SAM" id="MobiDB-lite"/>
    </source>
</evidence>
<evidence type="ECO:0000269" key="7">
    <source>
    </source>
</evidence>
<evidence type="ECO:0000269" key="8">
    <source>
    </source>
</evidence>
<evidence type="ECO:0000269" key="9">
    <source>
    </source>
</evidence>
<evidence type="ECO:0000269" key="10">
    <source>
    </source>
</evidence>
<evidence type="ECO:0000269" key="11">
    <source>
    </source>
</evidence>
<evidence type="ECO:0000269" key="12">
    <source>
    </source>
</evidence>
<evidence type="ECO:0000303" key="13">
    <source>
    </source>
</evidence>
<evidence type="ECO:0000305" key="14"/>
<protein>
    <recommendedName>
        <fullName evidence="14">Dolichyl-phosphate-mannose--protein mannosyltransferase 2</fullName>
        <shortName>Protein mannosyltransferase 2</shortName>
        <ecNumber evidence="2 13">2.4.1.109</ecNumber>
    </recommendedName>
</protein>